<proteinExistence type="inferred from homology"/>
<accession>Q0BMC7</accession>
<dbReference type="EC" id="2.4.2.29" evidence="1"/>
<dbReference type="EMBL" id="CP000437">
    <property type="protein sequence ID" value="ABI82757.1"/>
    <property type="molecule type" value="Genomic_DNA"/>
</dbReference>
<dbReference type="RefSeq" id="WP_003015439.1">
    <property type="nucleotide sequence ID" value="NC_017463.1"/>
</dbReference>
<dbReference type="SMR" id="Q0BMC7"/>
<dbReference type="KEGG" id="fth:FTH_0831"/>
<dbReference type="UniPathway" id="UPA00392"/>
<dbReference type="GO" id="GO:0005829">
    <property type="term" value="C:cytosol"/>
    <property type="evidence" value="ECO:0007669"/>
    <property type="project" value="TreeGrafter"/>
</dbReference>
<dbReference type="GO" id="GO:0046872">
    <property type="term" value="F:metal ion binding"/>
    <property type="evidence" value="ECO:0007669"/>
    <property type="project" value="UniProtKB-KW"/>
</dbReference>
<dbReference type="GO" id="GO:0008479">
    <property type="term" value="F:tRNA-guanosine(34) queuine transglycosylase activity"/>
    <property type="evidence" value="ECO:0007669"/>
    <property type="project" value="UniProtKB-UniRule"/>
</dbReference>
<dbReference type="GO" id="GO:0008616">
    <property type="term" value="P:queuosine biosynthetic process"/>
    <property type="evidence" value="ECO:0007669"/>
    <property type="project" value="UniProtKB-UniRule"/>
</dbReference>
<dbReference type="GO" id="GO:0002099">
    <property type="term" value="P:tRNA wobble guanine modification"/>
    <property type="evidence" value="ECO:0007669"/>
    <property type="project" value="TreeGrafter"/>
</dbReference>
<dbReference type="GO" id="GO:0101030">
    <property type="term" value="P:tRNA-guanine transglycosylation"/>
    <property type="evidence" value="ECO:0007669"/>
    <property type="project" value="InterPro"/>
</dbReference>
<dbReference type="FunFam" id="3.20.20.105:FF:000001">
    <property type="entry name" value="Queuine tRNA-ribosyltransferase"/>
    <property type="match status" value="1"/>
</dbReference>
<dbReference type="Gene3D" id="3.20.20.105">
    <property type="entry name" value="Queuine tRNA-ribosyltransferase-like"/>
    <property type="match status" value="1"/>
</dbReference>
<dbReference type="HAMAP" id="MF_00168">
    <property type="entry name" value="Q_tRNA_Tgt"/>
    <property type="match status" value="1"/>
</dbReference>
<dbReference type="InterPro" id="IPR050076">
    <property type="entry name" value="ArchSynthase1/Queuine_TRR"/>
</dbReference>
<dbReference type="InterPro" id="IPR004803">
    <property type="entry name" value="TGT"/>
</dbReference>
<dbReference type="InterPro" id="IPR036511">
    <property type="entry name" value="TGT-like_sf"/>
</dbReference>
<dbReference type="InterPro" id="IPR002616">
    <property type="entry name" value="tRNA_ribo_trans-like"/>
</dbReference>
<dbReference type="NCBIfam" id="TIGR00430">
    <property type="entry name" value="Q_tRNA_tgt"/>
    <property type="match status" value="1"/>
</dbReference>
<dbReference type="NCBIfam" id="TIGR00449">
    <property type="entry name" value="tgt_general"/>
    <property type="match status" value="1"/>
</dbReference>
<dbReference type="PANTHER" id="PTHR46499">
    <property type="entry name" value="QUEUINE TRNA-RIBOSYLTRANSFERASE"/>
    <property type="match status" value="1"/>
</dbReference>
<dbReference type="PANTHER" id="PTHR46499:SF1">
    <property type="entry name" value="QUEUINE TRNA-RIBOSYLTRANSFERASE"/>
    <property type="match status" value="1"/>
</dbReference>
<dbReference type="Pfam" id="PF01702">
    <property type="entry name" value="TGT"/>
    <property type="match status" value="1"/>
</dbReference>
<dbReference type="SUPFAM" id="SSF51713">
    <property type="entry name" value="tRNA-guanine transglycosylase"/>
    <property type="match status" value="1"/>
</dbReference>
<gene>
    <name evidence="1" type="primary">tgt</name>
    <name type="ordered locus">FTH_0831</name>
</gene>
<sequence>MTVMKFDLIKKEGKARRGKITFPRGDIQTPAFMPVGTYGAVKSLSPVELKEMGAEIILGNTFHLWLRPGTEIIKKHGSLHGFNGWDKPILTDSGGFQVFSLGKMRKLTEEGVTFKSPVNSSKVFLSPEISMQVQRDLGSDIVMCFDECTPYPATEKEAKESMELSMRWAKRSKEAHGDNPSALFGIIQGGMYEHLRDESLAKLKEIDFDGFAIGGLSVGEPKEDMIRILDHTAHQMPEDKPRYLMGVGTPKDLVEAVYRGVDMFDCVMPSRNARNGHIFTSEGVIKIRNSKYKDDTSPLDPNCDCYTCKNFTKSYLHHLDKTKEILGSRLNTIHNLTFYQNLMKSIRKALDEGRFSEFRKEFLASYK</sequence>
<evidence type="ECO:0000255" key="1">
    <source>
        <dbReference type="HAMAP-Rule" id="MF_00168"/>
    </source>
</evidence>
<organism>
    <name type="scientific">Francisella tularensis subsp. holarctica (strain OSU18)</name>
    <dbReference type="NCBI Taxonomy" id="393011"/>
    <lineage>
        <taxon>Bacteria</taxon>
        <taxon>Pseudomonadati</taxon>
        <taxon>Pseudomonadota</taxon>
        <taxon>Gammaproteobacteria</taxon>
        <taxon>Thiotrichales</taxon>
        <taxon>Francisellaceae</taxon>
        <taxon>Francisella</taxon>
    </lineage>
</organism>
<comment type="function">
    <text evidence="1">Catalyzes the base-exchange of a guanine (G) residue with the queuine precursor 7-aminomethyl-7-deazaguanine (PreQ1) at position 34 (anticodon wobble position) in tRNAs with GU(N) anticodons (tRNA-Asp, -Asn, -His and -Tyr). Catalysis occurs through a double-displacement mechanism. The nucleophile active site attacks the C1' of nucleotide 34 to detach the guanine base from the RNA, forming a covalent enzyme-RNA intermediate. The proton acceptor active site deprotonates the incoming PreQ1, allowing a nucleophilic attack on the C1' of the ribose to form the product. After dissociation, two additional enzymatic reactions on the tRNA convert PreQ1 to queuine (Q), resulting in the hypermodified nucleoside queuosine (7-(((4,5-cis-dihydroxy-2-cyclopenten-1-yl)amino)methyl)-7-deazaguanosine).</text>
</comment>
<comment type="catalytic activity">
    <reaction evidence="1">
        <text>7-aminomethyl-7-carbaguanine + guanosine(34) in tRNA = 7-aminomethyl-7-carbaguanosine(34) in tRNA + guanine</text>
        <dbReference type="Rhea" id="RHEA:24104"/>
        <dbReference type="Rhea" id="RHEA-COMP:10341"/>
        <dbReference type="Rhea" id="RHEA-COMP:10342"/>
        <dbReference type="ChEBI" id="CHEBI:16235"/>
        <dbReference type="ChEBI" id="CHEBI:58703"/>
        <dbReference type="ChEBI" id="CHEBI:74269"/>
        <dbReference type="ChEBI" id="CHEBI:82833"/>
        <dbReference type="EC" id="2.4.2.29"/>
    </reaction>
</comment>
<comment type="cofactor">
    <cofactor evidence="1">
        <name>Zn(2+)</name>
        <dbReference type="ChEBI" id="CHEBI:29105"/>
    </cofactor>
    <text evidence="1">Binds 1 zinc ion per subunit.</text>
</comment>
<comment type="pathway">
    <text evidence="1">tRNA modification; tRNA-queuosine biosynthesis.</text>
</comment>
<comment type="subunit">
    <text evidence="1">Homodimer. Within each dimer, one monomer is responsible for RNA recognition and catalysis, while the other monomer binds to the replacement base PreQ1.</text>
</comment>
<comment type="similarity">
    <text evidence="1">Belongs to the queuine tRNA-ribosyltransferase family.</text>
</comment>
<reference key="1">
    <citation type="journal article" date="2006" name="J. Bacteriol.">
        <title>Chromosome rearrangement and diversification of Francisella tularensis revealed by the type B (OSU18) genome sequence.</title>
        <authorList>
            <person name="Petrosino J.F."/>
            <person name="Xiang Q."/>
            <person name="Karpathy S.E."/>
            <person name="Jiang H."/>
            <person name="Yerrapragada S."/>
            <person name="Liu Y."/>
            <person name="Gioia J."/>
            <person name="Hemphill L."/>
            <person name="Gonzalez A."/>
            <person name="Raghavan T.M."/>
            <person name="Uzman A."/>
            <person name="Fox G.E."/>
            <person name="Highlander S."/>
            <person name="Reichard M."/>
            <person name="Morton R.J."/>
            <person name="Clinkenbeard K.D."/>
            <person name="Weinstock G.M."/>
        </authorList>
    </citation>
    <scope>NUCLEOTIDE SEQUENCE [LARGE SCALE GENOMIC DNA]</scope>
    <source>
        <strain>OSU18</strain>
    </source>
</reference>
<keyword id="KW-0328">Glycosyltransferase</keyword>
<keyword id="KW-0479">Metal-binding</keyword>
<keyword id="KW-0671">Queuosine biosynthesis</keyword>
<keyword id="KW-0808">Transferase</keyword>
<keyword id="KW-0819">tRNA processing</keyword>
<keyword id="KW-0862">Zinc</keyword>
<protein>
    <recommendedName>
        <fullName evidence="1">Queuine tRNA-ribosyltransferase</fullName>
        <ecNumber evidence="1">2.4.2.29</ecNumber>
    </recommendedName>
    <alternativeName>
        <fullName evidence="1">Guanine insertion enzyme</fullName>
    </alternativeName>
    <alternativeName>
        <fullName evidence="1">tRNA-guanine transglycosylase</fullName>
    </alternativeName>
</protein>
<feature type="chain" id="PRO_1000016794" description="Queuine tRNA-ribosyltransferase">
    <location>
        <begin position="1"/>
        <end position="367"/>
    </location>
</feature>
<feature type="region of interest" description="RNA binding" evidence="1">
    <location>
        <begin position="246"/>
        <end position="252"/>
    </location>
</feature>
<feature type="active site" description="Proton acceptor" evidence="1">
    <location>
        <position position="92"/>
    </location>
</feature>
<feature type="active site" description="Nucleophile" evidence="1">
    <location>
        <position position="265"/>
    </location>
</feature>
<feature type="binding site" evidence="1">
    <location>
        <begin position="92"/>
        <end position="96"/>
    </location>
    <ligand>
        <name>substrate</name>
    </ligand>
</feature>
<feature type="binding site" evidence="1">
    <location>
        <position position="146"/>
    </location>
    <ligand>
        <name>substrate</name>
    </ligand>
</feature>
<feature type="binding site" evidence="1">
    <location>
        <position position="188"/>
    </location>
    <ligand>
        <name>substrate</name>
    </ligand>
</feature>
<feature type="binding site" evidence="1">
    <location>
        <position position="215"/>
    </location>
    <ligand>
        <name>substrate</name>
    </ligand>
</feature>
<feature type="binding site" evidence="1">
    <location>
        <position position="303"/>
    </location>
    <ligand>
        <name>Zn(2+)</name>
        <dbReference type="ChEBI" id="CHEBI:29105"/>
    </ligand>
</feature>
<feature type="binding site" evidence="1">
    <location>
        <position position="305"/>
    </location>
    <ligand>
        <name>Zn(2+)</name>
        <dbReference type="ChEBI" id="CHEBI:29105"/>
    </ligand>
</feature>
<feature type="binding site" evidence="1">
    <location>
        <position position="308"/>
    </location>
    <ligand>
        <name>Zn(2+)</name>
        <dbReference type="ChEBI" id="CHEBI:29105"/>
    </ligand>
</feature>
<feature type="binding site" evidence="1">
    <location>
        <position position="334"/>
    </location>
    <ligand>
        <name>Zn(2+)</name>
        <dbReference type="ChEBI" id="CHEBI:29105"/>
    </ligand>
</feature>
<name>TGT_FRATO</name>